<dbReference type="EC" id="5.4.99.24"/>
<dbReference type="EMBL" id="AE005674">
    <property type="protein sequence ID" value="AAN42709.1"/>
    <property type="molecule type" value="Genomic_DNA"/>
</dbReference>
<dbReference type="EMBL" id="AE014073">
    <property type="protein sequence ID" value="AAP16597.1"/>
    <property type="molecule type" value="Genomic_DNA"/>
</dbReference>
<dbReference type="RefSeq" id="WP_000846343.1">
    <property type="nucleotide sequence ID" value="NZ_WPGW01000001.1"/>
</dbReference>
<dbReference type="SMR" id="P0AA40"/>
<dbReference type="STRING" id="198214.SF1090"/>
<dbReference type="PaxDb" id="198214-SF1090"/>
<dbReference type="GeneID" id="75203672"/>
<dbReference type="KEGG" id="sfl:SF1090"/>
<dbReference type="KEGG" id="sfx:S1170"/>
<dbReference type="PATRIC" id="fig|198214.7.peg.1278"/>
<dbReference type="HOGENOM" id="CLU_016902_1_1_6"/>
<dbReference type="Proteomes" id="UP000001006">
    <property type="component" value="Chromosome"/>
</dbReference>
<dbReference type="Proteomes" id="UP000002673">
    <property type="component" value="Chromosome"/>
</dbReference>
<dbReference type="GO" id="GO:0160141">
    <property type="term" value="F:23S rRNA pseudouridine(955/2504/2580) synthase activity"/>
    <property type="evidence" value="ECO:0007669"/>
    <property type="project" value="UniProtKB-EC"/>
</dbReference>
<dbReference type="GO" id="GO:0003723">
    <property type="term" value="F:RNA binding"/>
    <property type="evidence" value="ECO:0007669"/>
    <property type="project" value="UniProtKB-KW"/>
</dbReference>
<dbReference type="GO" id="GO:0000455">
    <property type="term" value="P:enzyme-directed rRNA pseudouridine synthesis"/>
    <property type="evidence" value="ECO:0007669"/>
    <property type="project" value="UniProtKB-ARBA"/>
</dbReference>
<dbReference type="CDD" id="cd02869">
    <property type="entry name" value="PseudoU_synth_RluA_like"/>
    <property type="match status" value="1"/>
</dbReference>
<dbReference type="CDD" id="cd00165">
    <property type="entry name" value="S4"/>
    <property type="match status" value="1"/>
</dbReference>
<dbReference type="FunFam" id="3.10.290.10:FF:000010">
    <property type="entry name" value="Pseudouridine synthase"/>
    <property type="match status" value="1"/>
</dbReference>
<dbReference type="FunFam" id="3.30.2350.10:FF:000007">
    <property type="entry name" value="Pseudouridine synthase"/>
    <property type="match status" value="1"/>
</dbReference>
<dbReference type="Gene3D" id="3.30.2350.10">
    <property type="entry name" value="Pseudouridine synthase"/>
    <property type="match status" value="1"/>
</dbReference>
<dbReference type="Gene3D" id="3.10.290.10">
    <property type="entry name" value="RNA-binding S4 domain"/>
    <property type="match status" value="1"/>
</dbReference>
<dbReference type="InterPro" id="IPR020103">
    <property type="entry name" value="PsdUridine_synth_cat_dom_sf"/>
</dbReference>
<dbReference type="InterPro" id="IPR006224">
    <property type="entry name" value="PsdUridine_synth_RluA-like_CS"/>
</dbReference>
<dbReference type="InterPro" id="IPR006225">
    <property type="entry name" value="PsdUridine_synth_RluC/D"/>
</dbReference>
<dbReference type="InterPro" id="IPR006145">
    <property type="entry name" value="PsdUridine_synth_RsuA/RluA"/>
</dbReference>
<dbReference type="InterPro" id="IPR050188">
    <property type="entry name" value="RluA_PseudoU_synthase"/>
</dbReference>
<dbReference type="InterPro" id="IPR002942">
    <property type="entry name" value="S4_RNA-bd"/>
</dbReference>
<dbReference type="InterPro" id="IPR036986">
    <property type="entry name" value="S4_RNA-bd_sf"/>
</dbReference>
<dbReference type="NCBIfam" id="NF008249">
    <property type="entry name" value="PRK11025.1"/>
    <property type="match status" value="1"/>
</dbReference>
<dbReference type="NCBIfam" id="TIGR00005">
    <property type="entry name" value="rluA_subfam"/>
    <property type="match status" value="1"/>
</dbReference>
<dbReference type="PANTHER" id="PTHR21600">
    <property type="entry name" value="MITOCHONDRIAL RNA PSEUDOURIDINE SYNTHASE"/>
    <property type="match status" value="1"/>
</dbReference>
<dbReference type="PANTHER" id="PTHR21600:SF92">
    <property type="entry name" value="RIBOSOMAL LARGE SUBUNIT PSEUDOURIDINE SYNTHASE C"/>
    <property type="match status" value="1"/>
</dbReference>
<dbReference type="Pfam" id="PF00849">
    <property type="entry name" value="PseudoU_synth_2"/>
    <property type="match status" value="1"/>
</dbReference>
<dbReference type="Pfam" id="PF01479">
    <property type="entry name" value="S4"/>
    <property type="match status" value="1"/>
</dbReference>
<dbReference type="SMART" id="SM00363">
    <property type="entry name" value="S4"/>
    <property type="match status" value="1"/>
</dbReference>
<dbReference type="SUPFAM" id="SSF55174">
    <property type="entry name" value="Alpha-L RNA-binding motif"/>
    <property type="match status" value="1"/>
</dbReference>
<dbReference type="SUPFAM" id="SSF55120">
    <property type="entry name" value="Pseudouridine synthase"/>
    <property type="match status" value="1"/>
</dbReference>
<dbReference type="PROSITE" id="PS01129">
    <property type="entry name" value="PSI_RLU"/>
    <property type="match status" value="1"/>
</dbReference>
<dbReference type="PROSITE" id="PS50889">
    <property type="entry name" value="S4"/>
    <property type="match status" value="1"/>
</dbReference>
<reference key="1">
    <citation type="journal article" date="2002" name="Nucleic Acids Res.">
        <title>Genome sequence of Shigella flexneri 2a: insights into pathogenicity through comparison with genomes of Escherichia coli K12 and O157.</title>
        <authorList>
            <person name="Jin Q."/>
            <person name="Yuan Z."/>
            <person name="Xu J."/>
            <person name="Wang Y."/>
            <person name="Shen Y."/>
            <person name="Lu W."/>
            <person name="Wang J."/>
            <person name="Liu H."/>
            <person name="Yang J."/>
            <person name="Yang F."/>
            <person name="Zhang X."/>
            <person name="Zhang J."/>
            <person name="Yang G."/>
            <person name="Wu H."/>
            <person name="Qu D."/>
            <person name="Dong J."/>
            <person name="Sun L."/>
            <person name="Xue Y."/>
            <person name="Zhao A."/>
            <person name="Gao Y."/>
            <person name="Zhu J."/>
            <person name="Kan B."/>
            <person name="Ding K."/>
            <person name="Chen S."/>
            <person name="Cheng H."/>
            <person name="Yao Z."/>
            <person name="He B."/>
            <person name="Chen R."/>
            <person name="Ma D."/>
            <person name="Qiang B."/>
            <person name="Wen Y."/>
            <person name="Hou Y."/>
            <person name="Yu J."/>
        </authorList>
    </citation>
    <scope>NUCLEOTIDE SEQUENCE [LARGE SCALE GENOMIC DNA]</scope>
    <source>
        <strain>301 / Serotype 2a</strain>
    </source>
</reference>
<reference key="2">
    <citation type="journal article" date="2003" name="Infect. Immun.">
        <title>Complete genome sequence and comparative genomics of Shigella flexneri serotype 2a strain 2457T.</title>
        <authorList>
            <person name="Wei J."/>
            <person name="Goldberg M.B."/>
            <person name="Burland V."/>
            <person name="Venkatesan M.M."/>
            <person name="Deng W."/>
            <person name="Fournier G."/>
            <person name="Mayhew G.F."/>
            <person name="Plunkett G. III"/>
            <person name="Rose D.J."/>
            <person name="Darling A."/>
            <person name="Mau B."/>
            <person name="Perna N.T."/>
            <person name="Payne S.M."/>
            <person name="Runyen-Janecky L.J."/>
            <person name="Zhou S."/>
            <person name="Schwartz D.C."/>
            <person name="Blattner F.R."/>
        </authorList>
    </citation>
    <scope>NUCLEOTIDE SEQUENCE [LARGE SCALE GENOMIC DNA]</scope>
    <source>
        <strain>ATCC 700930 / 2457T / Serotype 2a</strain>
    </source>
</reference>
<keyword id="KW-0413">Isomerase</keyword>
<keyword id="KW-1185">Reference proteome</keyword>
<keyword id="KW-0694">RNA-binding</keyword>
<keyword id="KW-0698">rRNA processing</keyword>
<proteinExistence type="inferred from homology"/>
<comment type="function">
    <text evidence="1">Responsible for synthesis of pseudouridine from uracil at positions 955, 2504 and 2580 in 23S ribosomal RNA.</text>
</comment>
<comment type="catalytic activity">
    <reaction>
        <text>uridine(955/2504/2580) in 23S rRNA = pseudouridine(955/2504/2580) in 23S rRNA</text>
        <dbReference type="Rhea" id="RHEA:42528"/>
        <dbReference type="Rhea" id="RHEA-COMP:10099"/>
        <dbReference type="Rhea" id="RHEA-COMP:10100"/>
        <dbReference type="ChEBI" id="CHEBI:65314"/>
        <dbReference type="ChEBI" id="CHEBI:65315"/>
        <dbReference type="EC" id="5.4.99.24"/>
    </reaction>
</comment>
<comment type="similarity">
    <text evidence="3">Belongs to the pseudouridine synthase RluA family.</text>
</comment>
<name>RLUC_SHIFL</name>
<feature type="chain" id="PRO_0000162678" description="Ribosomal large subunit pseudouridine synthase C">
    <location>
        <begin position="1"/>
        <end position="319"/>
    </location>
</feature>
<feature type="domain" description="S4 RNA-binding" evidence="2">
    <location>
        <begin position="20"/>
        <end position="83"/>
    </location>
</feature>
<feature type="active site" evidence="1">
    <location>
        <position position="144"/>
    </location>
</feature>
<organism>
    <name type="scientific">Shigella flexneri</name>
    <dbReference type="NCBI Taxonomy" id="623"/>
    <lineage>
        <taxon>Bacteria</taxon>
        <taxon>Pseudomonadati</taxon>
        <taxon>Pseudomonadota</taxon>
        <taxon>Gammaproteobacteria</taxon>
        <taxon>Enterobacterales</taxon>
        <taxon>Enterobacteriaceae</taxon>
        <taxon>Shigella</taxon>
    </lineage>
</organism>
<gene>
    <name type="primary">rluC</name>
    <name type="ordered locus">SF1090</name>
    <name type="ordered locus">S1170</name>
</gene>
<protein>
    <recommendedName>
        <fullName>Ribosomal large subunit pseudouridine synthase C</fullName>
        <ecNumber>5.4.99.24</ecNumber>
    </recommendedName>
    <alternativeName>
        <fullName>23S rRNA pseudouridine(955/2504/2580) synthase</fullName>
    </alternativeName>
    <alternativeName>
        <fullName>rRNA pseudouridylate synthase C</fullName>
    </alternativeName>
    <alternativeName>
        <fullName>rRNA-uridine isomerase C</fullName>
    </alternativeName>
</protein>
<sequence length="319" mass="36027">MKTETPSVKIVAITADEAGQRIDNFLRTQLKGVPKSMIYRILRKGEVRVNKKRIKPEYKLEAGDEVRIPPVRVAEREEEAVSPHLQKVAALADVILYEDDHILVLNKPSGTAVHGGSGLSFGVIEGLRALRPEARFLELVHRLDRDTSGVLLVAKKRSALRSLHEQLREKGMQKDYLALVRGQWQSHVKSVQAPLLKNILQSGERIVRVSQEGKPSETRFKVEERYAFATLVRCSPVTGRTHQIRVHTQYAGHPIAFDDRYGDREFDRQLTEAGTGLNRLFLHAAALKFTHPGTGEVMRIEAPMDEGLKRCLQKLRNAR</sequence>
<evidence type="ECO:0000250" key="1"/>
<evidence type="ECO:0000255" key="2">
    <source>
        <dbReference type="PROSITE-ProRule" id="PRU00182"/>
    </source>
</evidence>
<evidence type="ECO:0000305" key="3"/>
<accession>P0AA40</accession>
<accession>P23851</accession>